<protein>
    <recommendedName>
        <fullName evidence="1">Small ribosomal subunit protein bS16c</fullName>
    </recommendedName>
    <alternativeName>
        <fullName evidence="2">30S ribosomal protein S16, chloroplastic</fullName>
    </alternativeName>
</protein>
<geneLocation type="chloroplast"/>
<name>RR16_EMIHU</name>
<sequence>MLKIRLKRFGRKAQPCYRIVVTDSRVKRDGKALEEVGFYNPLTDETHLKFNRIVERLKTGAQPTETVRNIFLKAKVFDALT</sequence>
<gene>
    <name evidence="1" type="primary">rps16</name>
</gene>
<accession>Q4G391</accession>
<evidence type="ECO:0000255" key="1">
    <source>
        <dbReference type="HAMAP-Rule" id="MF_00385"/>
    </source>
</evidence>
<evidence type="ECO:0000305" key="2"/>
<reference key="1">
    <citation type="journal article" date="2005" name="DNA Res.">
        <title>The complete plastid genome sequence of the haptophyte Emiliania huxleyi: a comparison to other plastid genomes.</title>
        <authorList>
            <person name="Sanchez-Puerta M.V."/>
            <person name="Bachvaroff T.R."/>
            <person name="Delwiche C.F."/>
        </authorList>
    </citation>
    <scope>NUCLEOTIDE SEQUENCE [LARGE SCALE GENOMIC DNA]</scope>
    <source>
        <strain>CCMP373 / CSIRO-CS-57 / BT6</strain>
    </source>
</reference>
<dbReference type="EMBL" id="AY741371">
    <property type="protein sequence ID" value="AAX13875.1"/>
    <property type="molecule type" value="Genomic_DNA"/>
</dbReference>
<dbReference type="RefSeq" id="YP_277376.1">
    <property type="nucleotide sequence ID" value="NC_007288.1"/>
</dbReference>
<dbReference type="SMR" id="Q4G391"/>
<dbReference type="STRING" id="2903.Q4G391"/>
<dbReference type="GeneID" id="3562455"/>
<dbReference type="GO" id="GO:0009507">
    <property type="term" value="C:chloroplast"/>
    <property type="evidence" value="ECO:0007669"/>
    <property type="project" value="UniProtKB-SubCell"/>
</dbReference>
<dbReference type="GO" id="GO:0005739">
    <property type="term" value="C:mitochondrion"/>
    <property type="evidence" value="ECO:0007669"/>
    <property type="project" value="GOC"/>
</dbReference>
<dbReference type="GO" id="GO:0015935">
    <property type="term" value="C:small ribosomal subunit"/>
    <property type="evidence" value="ECO:0007669"/>
    <property type="project" value="TreeGrafter"/>
</dbReference>
<dbReference type="GO" id="GO:0003735">
    <property type="term" value="F:structural constituent of ribosome"/>
    <property type="evidence" value="ECO:0007669"/>
    <property type="project" value="InterPro"/>
</dbReference>
<dbReference type="GO" id="GO:0032543">
    <property type="term" value="P:mitochondrial translation"/>
    <property type="evidence" value="ECO:0007669"/>
    <property type="project" value="TreeGrafter"/>
</dbReference>
<dbReference type="Gene3D" id="3.30.1320.10">
    <property type="match status" value="1"/>
</dbReference>
<dbReference type="HAMAP" id="MF_00385">
    <property type="entry name" value="Ribosomal_bS16"/>
    <property type="match status" value="1"/>
</dbReference>
<dbReference type="InterPro" id="IPR000307">
    <property type="entry name" value="Ribosomal_bS16"/>
</dbReference>
<dbReference type="InterPro" id="IPR020592">
    <property type="entry name" value="Ribosomal_bS16_CS"/>
</dbReference>
<dbReference type="InterPro" id="IPR023803">
    <property type="entry name" value="Ribosomal_bS16_dom_sf"/>
</dbReference>
<dbReference type="NCBIfam" id="TIGR00002">
    <property type="entry name" value="S16"/>
    <property type="match status" value="1"/>
</dbReference>
<dbReference type="PANTHER" id="PTHR12919">
    <property type="entry name" value="30S RIBOSOMAL PROTEIN S16"/>
    <property type="match status" value="1"/>
</dbReference>
<dbReference type="PANTHER" id="PTHR12919:SF20">
    <property type="entry name" value="SMALL RIBOSOMAL SUBUNIT PROTEIN BS16M"/>
    <property type="match status" value="1"/>
</dbReference>
<dbReference type="Pfam" id="PF00886">
    <property type="entry name" value="Ribosomal_S16"/>
    <property type="match status" value="1"/>
</dbReference>
<dbReference type="SUPFAM" id="SSF54565">
    <property type="entry name" value="Ribosomal protein S16"/>
    <property type="match status" value="1"/>
</dbReference>
<dbReference type="PROSITE" id="PS00732">
    <property type="entry name" value="RIBOSOMAL_S16"/>
    <property type="match status" value="1"/>
</dbReference>
<keyword id="KW-0150">Chloroplast</keyword>
<keyword id="KW-0934">Plastid</keyword>
<keyword id="KW-0687">Ribonucleoprotein</keyword>
<keyword id="KW-0689">Ribosomal protein</keyword>
<organism>
    <name type="scientific">Emiliania huxleyi</name>
    <name type="common">Coccolithophore</name>
    <name type="synonym">Pontosphaera huxleyi</name>
    <dbReference type="NCBI Taxonomy" id="2903"/>
    <lineage>
        <taxon>Eukaryota</taxon>
        <taxon>Haptista</taxon>
        <taxon>Haptophyta</taxon>
        <taxon>Prymnesiophyceae</taxon>
        <taxon>Isochrysidales</taxon>
        <taxon>Noelaerhabdaceae</taxon>
        <taxon>Emiliania</taxon>
    </lineage>
</organism>
<comment type="subcellular location">
    <subcellularLocation>
        <location>Plastid</location>
        <location>Chloroplast</location>
    </subcellularLocation>
</comment>
<comment type="similarity">
    <text evidence="1">Belongs to the bacterial ribosomal protein bS16 family.</text>
</comment>
<feature type="chain" id="PRO_0000276965" description="Small ribosomal subunit protein bS16c">
    <location>
        <begin position="1"/>
        <end position="81"/>
    </location>
</feature>
<proteinExistence type="inferred from homology"/>